<protein>
    <recommendedName>
        <fullName>Androgen-binding protein homolog</fullName>
    </recommendedName>
</protein>
<proteinExistence type="inferred from homology"/>
<evidence type="ECO:0000255" key="1"/>
<evidence type="ECO:0000305" key="2"/>
<name>ABP_MESAU</name>
<dbReference type="EMBL" id="DQ837221">
    <property type="protein sequence ID" value="ABH05958.1"/>
    <property type="molecule type" value="mRNA"/>
</dbReference>
<dbReference type="RefSeq" id="XP_040591417.1">
    <property type="nucleotide sequence ID" value="XM_040735483.1"/>
</dbReference>
<dbReference type="SMR" id="Q0PGP2"/>
<dbReference type="GeneID" id="101828491"/>
<dbReference type="eggNOG" id="ENOG502RU0W">
    <property type="taxonomic scope" value="Eukaryota"/>
</dbReference>
<dbReference type="OrthoDB" id="9591489at2759"/>
<dbReference type="Proteomes" id="UP000189706">
    <property type="component" value="Unplaced"/>
</dbReference>
<dbReference type="GO" id="GO:0005615">
    <property type="term" value="C:extracellular space"/>
    <property type="evidence" value="ECO:0007669"/>
    <property type="project" value="InterPro"/>
</dbReference>
<dbReference type="Gene3D" id="1.20.920.50">
    <property type="match status" value="1"/>
</dbReference>
<dbReference type="InterPro" id="IPR015332">
    <property type="entry name" value="CH2-like"/>
</dbReference>
<dbReference type="InterPro" id="IPR016126">
    <property type="entry name" value="Secretoglobin"/>
</dbReference>
<dbReference type="InterPro" id="IPR053723">
    <property type="entry name" value="Secretoglobin_Domain_sf"/>
</dbReference>
<dbReference type="InterPro" id="IPR035960">
    <property type="entry name" value="Secretoglobin_sf"/>
</dbReference>
<dbReference type="PANTHER" id="PTHR31708">
    <property type="entry name" value="ABPBG26-RELATED"/>
    <property type="match status" value="1"/>
</dbReference>
<dbReference type="PANTHER" id="PTHR31708:SF0">
    <property type="entry name" value="ABPBG26-RELATED"/>
    <property type="match status" value="1"/>
</dbReference>
<dbReference type="Pfam" id="PF09252">
    <property type="entry name" value="Feld-I_B"/>
    <property type="match status" value="1"/>
</dbReference>
<dbReference type="SUPFAM" id="SSF48201">
    <property type="entry name" value="Uteroglobin-like"/>
    <property type="match status" value="1"/>
</dbReference>
<dbReference type="PROSITE" id="PS51311">
    <property type="entry name" value="SCGB"/>
    <property type="match status" value="1"/>
</dbReference>
<keyword id="KW-1185">Reference proteome</keyword>
<keyword id="KW-0964">Secreted</keyword>
<keyword id="KW-0732">Signal</keyword>
<organism>
    <name type="scientific">Mesocricetus auratus</name>
    <name type="common">Golden hamster</name>
    <dbReference type="NCBI Taxonomy" id="10036"/>
    <lineage>
        <taxon>Eukaryota</taxon>
        <taxon>Metazoa</taxon>
        <taxon>Chordata</taxon>
        <taxon>Craniata</taxon>
        <taxon>Vertebrata</taxon>
        <taxon>Euteleostomi</taxon>
        <taxon>Mammalia</taxon>
        <taxon>Eutheria</taxon>
        <taxon>Euarchontoglires</taxon>
        <taxon>Glires</taxon>
        <taxon>Rodentia</taxon>
        <taxon>Myomorpha</taxon>
        <taxon>Muroidea</taxon>
        <taxon>Cricetidae</taxon>
        <taxon>Cricetinae</taxon>
        <taxon>Mesocricetus</taxon>
    </lineage>
</organism>
<accession>Q0PGP2</accession>
<comment type="subcellular location">
    <subcellularLocation>
        <location evidence="2">Secreted</location>
    </subcellularLocation>
</comment>
<comment type="similarity">
    <text evidence="2">Belongs to the secretoglobin family.</text>
</comment>
<sequence length="115" mass="12970">MKGTLLLLALLVTGELGFQTTEACIPFYEAFGAVVLGNKQVLDVVLSKFNATDKEREAFEKIQECYNDGGLKSKLLDTRVVYEVTVNSPCKEYYTKDTILKVEDLLFQIQRHIMG</sequence>
<reference key="1">
    <citation type="submission" date="2006-07" db="EMBL/GenBank/DDBJ databases">
        <title>cDNA cloning and hormonal regulation of a novel protein belonging to the secretoglobin family, expressed female-specifically in hamster lacrimal gland.</title>
        <authorList>
            <person name="Paliwal A."/>
            <person name="De P.K."/>
        </authorList>
    </citation>
    <scope>NUCLEOTIDE SEQUENCE [MRNA]</scope>
    <source>
        <tissue>Lacrimal gland</tissue>
    </source>
</reference>
<feature type="signal peptide" evidence="1">
    <location>
        <begin position="1"/>
        <end position="23"/>
    </location>
</feature>
<feature type="chain" id="PRO_5000141834" description="Androgen-binding protein homolog">
    <location>
        <begin position="24"/>
        <end position="115"/>
    </location>
</feature>